<proteinExistence type="evidence at protein level"/>
<reference key="1">
    <citation type="journal article" date="1998" name="Neuron">
        <title>Artemin, a novel member of the GDNF ligand family, supports peripheral and central neurons and signals through the GFRalpha3-RET receptor complex.</title>
        <authorList>
            <person name="Baloh R.H."/>
            <person name="Tansey M.G."/>
            <person name="Lampe P.A."/>
            <person name="Fahrner T.J."/>
            <person name="Enomoto H."/>
            <person name="Simburger K.S."/>
            <person name="Leitner M.L."/>
            <person name="Araki T."/>
            <person name="Johnson E.M. Jr."/>
            <person name="Milbrandt J."/>
        </authorList>
    </citation>
    <scope>NUCLEOTIDE SEQUENCE [GENOMIC DNA / MRNA] (ISOFORMS 1 AND 2)</scope>
    <scope>FUNCTION</scope>
    <scope>TISSUE SPECIFICITY</scope>
    <scope>DEVELOPMENTAL STAGE</scope>
    <scope>VARIANT ARG-19</scope>
</reference>
<reference key="2">
    <citation type="journal article" date="1999" name="Eur. J. Biochem.">
        <title>Enovin, a member of the glial cell-line-derived neurotrophic factor (GDNF) family with growth promoting activity on neuronal cells. Existence and tissue-specific expression of different splice variants.</title>
        <authorList>
            <person name="Masure S."/>
            <person name="Geerts H."/>
            <person name="Cik M."/>
            <person name="Hoefnagel E."/>
            <person name="Van Den Kieboom G."/>
            <person name="Tuytelaars A."/>
            <person name="Harris S."/>
            <person name="Lesage A.S.J."/>
            <person name="Leysen J.E."/>
            <person name="van der Helm L."/>
            <person name="Verhasselt P."/>
            <person name="Yon J."/>
            <person name="Gordon R.D."/>
        </authorList>
    </citation>
    <scope>NUCLEOTIDE SEQUENCE [GENOMIC DNA] (ISOFORMS 1 AND 3)</scope>
    <scope>FUNCTION</scope>
    <scope>TISSUE SPECIFICITY</scope>
    <scope>VARIANT ARG-19</scope>
</reference>
<reference key="3">
    <citation type="journal article" date="2000" name="Mol. Cell. Neurosci.">
        <title>In vivo protection of nigral dopamine neurons by lentiviral gene transfer of the novel GDNF-family member neublastin/artemin.</title>
        <authorList>
            <person name="Rosenblad C."/>
            <person name="Gronborg M."/>
            <person name="Hansen C."/>
            <person name="Blom N."/>
            <person name="Meyer M."/>
            <person name="Johansen J."/>
            <person name="Dago L."/>
            <person name="Kirik D."/>
            <person name="Patel U.A."/>
            <person name="Lundberg C."/>
            <person name="Trono D."/>
            <person name="Bjoerklund A."/>
            <person name="Johansen T.E."/>
        </authorList>
    </citation>
    <scope>NUCLEOTIDE SEQUENCE [MRNA] (ISOFORM 1)</scope>
    <scope>VARIANT ARG-19</scope>
    <source>
        <tissue>Brain</tissue>
    </source>
</reference>
<reference key="4">
    <citation type="journal article" date="2001" name="Mol. Cell. Neurosci.">
        <authorList>
            <person name="Rosenblad C."/>
            <person name="Gronborg M."/>
            <person name="Hansen C."/>
            <person name="Blom N."/>
            <person name="Meyer M."/>
            <person name="Johansen J."/>
            <person name="Dago L."/>
            <person name="Kirik D."/>
            <person name="Patel U.A."/>
            <person name="Lundberg C."/>
            <person name="Trono D."/>
            <person name="Bjoerklund A."/>
            <person name="Johansen T.E."/>
        </authorList>
    </citation>
    <scope>ERRATUM OF PUBMED:10673327</scope>
</reference>
<reference key="5">
    <citation type="journal article" date="2006" name="Nature">
        <title>The DNA sequence and biological annotation of human chromosome 1.</title>
        <authorList>
            <person name="Gregory S.G."/>
            <person name="Barlow K.F."/>
            <person name="McLay K.E."/>
            <person name="Kaul R."/>
            <person name="Swarbreck D."/>
            <person name="Dunham A."/>
            <person name="Scott C.E."/>
            <person name="Howe K.L."/>
            <person name="Woodfine K."/>
            <person name="Spencer C.C.A."/>
            <person name="Jones M.C."/>
            <person name="Gillson C."/>
            <person name="Searle S."/>
            <person name="Zhou Y."/>
            <person name="Kokocinski F."/>
            <person name="McDonald L."/>
            <person name="Evans R."/>
            <person name="Phillips K."/>
            <person name="Atkinson A."/>
            <person name="Cooper R."/>
            <person name="Jones C."/>
            <person name="Hall R.E."/>
            <person name="Andrews T.D."/>
            <person name="Lloyd C."/>
            <person name="Ainscough R."/>
            <person name="Almeida J.P."/>
            <person name="Ambrose K.D."/>
            <person name="Anderson F."/>
            <person name="Andrew R.W."/>
            <person name="Ashwell R.I.S."/>
            <person name="Aubin K."/>
            <person name="Babbage A.K."/>
            <person name="Bagguley C.L."/>
            <person name="Bailey J."/>
            <person name="Beasley H."/>
            <person name="Bethel G."/>
            <person name="Bird C.P."/>
            <person name="Bray-Allen S."/>
            <person name="Brown J.Y."/>
            <person name="Brown A.J."/>
            <person name="Buckley D."/>
            <person name="Burton J."/>
            <person name="Bye J."/>
            <person name="Carder C."/>
            <person name="Chapman J.C."/>
            <person name="Clark S.Y."/>
            <person name="Clarke G."/>
            <person name="Clee C."/>
            <person name="Cobley V."/>
            <person name="Collier R.E."/>
            <person name="Corby N."/>
            <person name="Coville G.J."/>
            <person name="Davies J."/>
            <person name="Deadman R."/>
            <person name="Dunn M."/>
            <person name="Earthrowl M."/>
            <person name="Ellington A.G."/>
            <person name="Errington H."/>
            <person name="Frankish A."/>
            <person name="Frankland J."/>
            <person name="French L."/>
            <person name="Garner P."/>
            <person name="Garnett J."/>
            <person name="Gay L."/>
            <person name="Ghori M.R.J."/>
            <person name="Gibson R."/>
            <person name="Gilby L.M."/>
            <person name="Gillett W."/>
            <person name="Glithero R.J."/>
            <person name="Grafham D.V."/>
            <person name="Griffiths C."/>
            <person name="Griffiths-Jones S."/>
            <person name="Grocock R."/>
            <person name="Hammond S."/>
            <person name="Harrison E.S.I."/>
            <person name="Hart E."/>
            <person name="Haugen E."/>
            <person name="Heath P.D."/>
            <person name="Holmes S."/>
            <person name="Holt K."/>
            <person name="Howden P.J."/>
            <person name="Hunt A.R."/>
            <person name="Hunt S.E."/>
            <person name="Hunter G."/>
            <person name="Isherwood J."/>
            <person name="James R."/>
            <person name="Johnson C."/>
            <person name="Johnson D."/>
            <person name="Joy A."/>
            <person name="Kay M."/>
            <person name="Kershaw J.K."/>
            <person name="Kibukawa M."/>
            <person name="Kimberley A.M."/>
            <person name="King A."/>
            <person name="Knights A.J."/>
            <person name="Lad H."/>
            <person name="Laird G."/>
            <person name="Lawlor S."/>
            <person name="Leongamornlert D.A."/>
            <person name="Lloyd D.M."/>
            <person name="Loveland J."/>
            <person name="Lovell J."/>
            <person name="Lush M.J."/>
            <person name="Lyne R."/>
            <person name="Martin S."/>
            <person name="Mashreghi-Mohammadi M."/>
            <person name="Matthews L."/>
            <person name="Matthews N.S.W."/>
            <person name="McLaren S."/>
            <person name="Milne S."/>
            <person name="Mistry S."/>
            <person name="Moore M.J.F."/>
            <person name="Nickerson T."/>
            <person name="O'Dell C.N."/>
            <person name="Oliver K."/>
            <person name="Palmeiri A."/>
            <person name="Palmer S.A."/>
            <person name="Parker A."/>
            <person name="Patel D."/>
            <person name="Pearce A.V."/>
            <person name="Peck A.I."/>
            <person name="Pelan S."/>
            <person name="Phelps K."/>
            <person name="Phillimore B.J."/>
            <person name="Plumb R."/>
            <person name="Rajan J."/>
            <person name="Raymond C."/>
            <person name="Rouse G."/>
            <person name="Saenphimmachak C."/>
            <person name="Sehra H.K."/>
            <person name="Sheridan E."/>
            <person name="Shownkeen R."/>
            <person name="Sims S."/>
            <person name="Skuce C.D."/>
            <person name="Smith M."/>
            <person name="Steward C."/>
            <person name="Subramanian S."/>
            <person name="Sycamore N."/>
            <person name="Tracey A."/>
            <person name="Tromans A."/>
            <person name="Van Helmond Z."/>
            <person name="Wall M."/>
            <person name="Wallis J.M."/>
            <person name="White S."/>
            <person name="Whitehead S.L."/>
            <person name="Wilkinson J.E."/>
            <person name="Willey D.L."/>
            <person name="Williams H."/>
            <person name="Wilming L."/>
            <person name="Wray P.W."/>
            <person name="Wu Z."/>
            <person name="Coulson A."/>
            <person name="Vaudin M."/>
            <person name="Sulston J.E."/>
            <person name="Durbin R.M."/>
            <person name="Hubbard T."/>
            <person name="Wooster R."/>
            <person name="Dunham I."/>
            <person name="Carter N.P."/>
            <person name="McVean G."/>
            <person name="Ross M.T."/>
            <person name="Harrow J."/>
            <person name="Olson M.V."/>
            <person name="Beck S."/>
            <person name="Rogers J."/>
            <person name="Bentley D.R."/>
        </authorList>
    </citation>
    <scope>NUCLEOTIDE SEQUENCE [LARGE SCALE GENOMIC DNA]</scope>
</reference>
<reference key="6">
    <citation type="submission" date="2005-09" db="EMBL/GenBank/DDBJ databases">
        <authorList>
            <person name="Mural R.J."/>
            <person name="Istrail S."/>
            <person name="Sutton G.G."/>
            <person name="Florea L."/>
            <person name="Halpern A.L."/>
            <person name="Mobarry C.M."/>
            <person name="Lippert R."/>
            <person name="Walenz B."/>
            <person name="Shatkay H."/>
            <person name="Dew I."/>
            <person name="Miller J.R."/>
            <person name="Flanigan M.J."/>
            <person name="Edwards N.J."/>
            <person name="Bolanos R."/>
            <person name="Fasulo D."/>
            <person name="Halldorsson B.V."/>
            <person name="Hannenhalli S."/>
            <person name="Turner R."/>
            <person name="Yooseph S."/>
            <person name="Lu F."/>
            <person name="Nusskern D.R."/>
            <person name="Shue B.C."/>
            <person name="Zheng X.H."/>
            <person name="Zhong F."/>
            <person name="Delcher A.L."/>
            <person name="Huson D.H."/>
            <person name="Kravitz S.A."/>
            <person name="Mouchard L."/>
            <person name="Reinert K."/>
            <person name="Remington K.A."/>
            <person name="Clark A.G."/>
            <person name="Waterman M.S."/>
            <person name="Eichler E.E."/>
            <person name="Adams M.D."/>
            <person name="Hunkapiller M.W."/>
            <person name="Myers E.W."/>
            <person name="Venter J.C."/>
        </authorList>
    </citation>
    <scope>NUCLEOTIDE SEQUENCE [LARGE SCALE GENOMIC DNA]</scope>
</reference>
<reference key="7">
    <citation type="journal article" date="2004" name="Genome Res.">
        <title>The status, quality, and expansion of the NIH full-length cDNA project: the Mammalian Gene Collection (MGC).</title>
        <authorList>
            <consortium name="The MGC Project Team"/>
        </authorList>
    </citation>
    <scope>NUCLEOTIDE SEQUENCE [LARGE SCALE MRNA] (ISOFORM 3)</scope>
    <source>
        <tissue>Brain</tissue>
    </source>
</reference>
<reference key="8">
    <citation type="journal article" date="2004" name="Toxicol. Pathol.">
        <title>The candidate neuroprotective agent artemin induces autonomic neural dysplasia without preventing peripheral nerve dysfunction.</title>
        <authorList>
            <person name="Bolon B."/>
            <person name="Jing S."/>
            <person name="Asuncion F."/>
            <person name="Scully S."/>
            <person name="Pisegna M."/>
            <person name="Van G.Y."/>
            <person name="Hu Z."/>
            <person name="Yu Y.B."/>
            <person name="Min H."/>
            <person name="Wild K."/>
            <person name="Rosenfeld R.D."/>
            <person name="Tarpley J."/>
            <person name="Carnahan J."/>
            <person name="Duryea D."/>
            <person name="Hill D."/>
            <person name="Kaufman S."/>
            <person name="Yan X.Q."/>
            <person name="Juan T."/>
            <person name="Christensen K."/>
            <person name="McCabe J."/>
            <person name="Simonet W.S."/>
        </authorList>
    </citation>
    <scope>SUBCELLULAR LOCATION</scope>
</reference>
<reference key="9">
    <citation type="journal article" date="2006" name="Structure">
        <title>Structure of artemin complexed with its receptor GFRalpha3: convergent recognition of glial cell line-derived neurotrophic factors.</title>
        <authorList>
            <person name="Wang X."/>
            <person name="Baloh R.H."/>
            <person name="Milbrandt J."/>
            <person name="Garcia K.C."/>
        </authorList>
    </citation>
    <scope>X-RAY CRYSTALLOGRAPHY (1.92 ANGSTROMS) OF 122-220 IN COMPLEX WITH GFRA3</scope>
    <scope>DISULFIDE BONDS</scope>
    <scope>SUBUNIT</scope>
</reference>
<reference evidence="16" key="10">
    <citation type="journal article" date="2019" name="Elife">
        <title>Cryo-EM analyses reveal the common mechanism and diversification in the activation of RET by different ligands.</title>
        <authorList>
            <person name="Li J."/>
            <person name="Shang G."/>
            <person name="Chen Y.J."/>
            <person name="Brautigam C.A."/>
            <person name="Liou J."/>
            <person name="Zhang X."/>
            <person name="Bai X.C."/>
        </authorList>
    </citation>
    <scope>STRUCTURE BY ELECTRON MICROSCOPY (3.80 ANGSTROMS) OF 108-220 IN COMPLEX WITH RET AND GFRA3</scope>
    <scope>FUNCTION</scope>
    <scope>SUBUNIT</scope>
    <scope>DISULFIDE BONDS</scope>
</reference>
<comment type="function">
    <text evidence="1 4 8 9">Growth factor that supports the survival of sensory and sympathetic peripheral neurons in culture and also supports the survival of dopaminergic neurons of the ventral mid-brain (PubMed:10583383, PubMed:9883723). Acts by binding to its coreceptor, GFRA3, leading to autophosphorylation and activation of the RET receptor (PubMed:31535977). Strong attractant of gut hematopoietic cells thus promoting the formation Peyer's patch-like structures, a major component of the gut-associated lymphoid tissue (By similarity).</text>
</comment>
<comment type="subunit">
    <text evidence="7 8">Homodimer; disulfide-linked (PubMed:16765900, PubMed:31535977). Interacts with GFRA3 coreceptor and RET: forms a 2:2:2 ternary complex composed of ARTN ligand, GFRA3 and RET receptor (PubMed:31535977).</text>
</comment>
<comment type="interaction">
    <interactant intactId="EBI-15586241">
        <id>Q5T4W7</id>
    </interactant>
    <interactant intactId="EBI-15586309">
        <id>O60609</id>
        <label>GFRA3</label>
    </interactant>
    <organismsDiffer>false</organismsDiffer>
    <experiments>4</experiments>
</comment>
<comment type="subcellular location">
    <subcellularLocation>
        <location evidence="6">Secreted</location>
    </subcellularLocation>
</comment>
<comment type="alternative products">
    <event type="alternative splicing"/>
    <isoform>
        <id>Q5T4W7-1</id>
        <name>1</name>
        <sequence type="displayed"/>
    </isoform>
    <isoform>
        <id>Q5T4W7-2</id>
        <name>2</name>
        <sequence type="described" ref="VSP_019335"/>
    </isoform>
    <isoform>
        <id>Q5T4W7-3</id>
        <name>3</name>
        <sequence type="described" ref="VSP_019336"/>
    </isoform>
</comment>
<comment type="tissue specificity">
    <text evidence="4 9">Ubiquitous. Expressed at high levels in peripheral tissues including prostate, placenta, pancreas, heart, kidney, pituitary gland, lung and testis. Expressed at low levels in the brain.</text>
</comment>
<comment type="developmental stage">
    <text evidence="9">Expressed during embryogenesis. High level expression seen in fetal kidney and lung while a low level expression seen in the fetal brain.</text>
</comment>
<comment type="similarity">
    <text evidence="13">Belongs to the TGF-beta family. GDNF subfamily.</text>
</comment>
<organism>
    <name type="scientific">Homo sapiens</name>
    <name type="common">Human</name>
    <dbReference type="NCBI Taxonomy" id="9606"/>
    <lineage>
        <taxon>Eukaryota</taxon>
        <taxon>Metazoa</taxon>
        <taxon>Chordata</taxon>
        <taxon>Craniata</taxon>
        <taxon>Vertebrata</taxon>
        <taxon>Euteleostomi</taxon>
        <taxon>Mammalia</taxon>
        <taxon>Eutheria</taxon>
        <taxon>Euarchontoglires</taxon>
        <taxon>Primates</taxon>
        <taxon>Haplorrhini</taxon>
        <taxon>Catarrhini</taxon>
        <taxon>Hominidae</taxon>
        <taxon>Homo</taxon>
    </lineage>
</organism>
<name>ARTN_HUMAN</name>
<feature type="signal peptide" evidence="2">
    <location>
        <begin position="1"/>
        <end position="39"/>
    </location>
</feature>
<feature type="propeptide" id="PRO_0000240286" evidence="14">
    <location>
        <begin position="40"/>
        <end position="107"/>
    </location>
</feature>
<feature type="chain" id="PRO_0000240287" description="Artemin" evidence="14">
    <location>
        <begin position="108"/>
        <end position="220"/>
    </location>
</feature>
<feature type="region of interest" description="Disordered" evidence="3">
    <location>
        <begin position="41"/>
        <end position="121"/>
    </location>
</feature>
<feature type="compositionally biased region" description="Pro residues" evidence="3">
    <location>
        <begin position="47"/>
        <end position="58"/>
    </location>
</feature>
<feature type="compositionally biased region" description="Pro residues" evidence="3">
    <location>
        <begin position="81"/>
        <end position="98"/>
    </location>
</feature>
<feature type="compositionally biased region" description="Low complexity" evidence="3">
    <location>
        <begin position="99"/>
        <end position="121"/>
    </location>
</feature>
<feature type="glycosylation site" description="N-linked (GlcNAc...) asparagine" evidence="2">
    <location>
        <position position="202"/>
    </location>
</feature>
<feature type="disulfide bond" evidence="7 8 16">
    <location>
        <begin position="123"/>
        <end position="188"/>
    </location>
</feature>
<feature type="disulfide bond" evidence="7 8 16">
    <location>
        <begin position="150"/>
        <end position="216"/>
    </location>
</feature>
<feature type="disulfide bond" evidence="7 8 16">
    <location>
        <begin position="154"/>
        <end position="218"/>
    </location>
</feature>
<feature type="disulfide bond" description="Interchain" evidence="7 8 16">
    <location>
        <position position="187"/>
    </location>
</feature>
<feature type="splice variant" id="VSP_019335" description="In isoform 2." evidence="12">
    <original>MELGLGGLSTLSHCPWPRQ</original>
    <variation>MPGLISARGQPLLEVLPPQAHLGALFLPEAPLGLSA</variation>
    <location>
        <begin position="1"/>
        <end position="19"/>
    </location>
</feature>
<feature type="splice variant" id="VSP_019336" description="In isoform 3." evidence="11">
    <original>P</original>
    <variation>APLGLSAQP</variation>
    <location>
        <position position="21"/>
    </location>
</feature>
<feature type="sequence variant" id="VAR_026718" description="In dbSNP:rs2242637." evidence="4 5 9">
    <original>Q</original>
    <variation>R</variation>
    <location>
        <position position="19"/>
    </location>
</feature>
<feature type="strand" evidence="17">
    <location>
        <begin position="122"/>
        <end position="131"/>
    </location>
</feature>
<feature type="helix" evidence="17">
    <location>
        <begin position="132"/>
        <end position="135"/>
    </location>
</feature>
<feature type="strand" evidence="17">
    <location>
        <begin position="136"/>
        <end position="138"/>
    </location>
</feature>
<feature type="strand" evidence="17">
    <location>
        <begin position="144"/>
        <end position="151"/>
    </location>
</feature>
<feature type="helix" evidence="17">
    <location>
        <begin position="155"/>
        <end position="157"/>
    </location>
</feature>
<feature type="helix" evidence="17">
    <location>
        <begin position="160"/>
        <end position="170"/>
    </location>
</feature>
<feature type="strand" evidence="17">
    <location>
        <begin position="178"/>
        <end position="180"/>
    </location>
</feature>
<feature type="strand" evidence="17">
    <location>
        <begin position="187"/>
        <end position="199"/>
    </location>
</feature>
<feature type="strand" evidence="17">
    <location>
        <begin position="205"/>
        <end position="219"/>
    </location>
</feature>
<protein>
    <recommendedName>
        <fullName evidence="12">Artemin</fullName>
    </recommendedName>
    <alternativeName>
        <fullName evidence="10">Enovin</fullName>
    </alternativeName>
    <alternativeName>
        <fullName>Neublastin</fullName>
    </alternativeName>
</protein>
<evidence type="ECO:0000250" key="1">
    <source>
        <dbReference type="UniProtKB" id="Q9Z0L2"/>
    </source>
</evidence>
<evidence type="ECO:0000255" key="2"/>
<evidence type="ECO:0000256" key="3">
    <source>
        <dbReference type="SAM" id="MobiDB-lite"/>
    </source>
</evidence>
<evidence type="ECO:0000269" key="4">
    <source>
    </source>
</evidence>
<evidence type="ECO:0000269" key="5">
    <source>
    </source>
</evidence>
<evidence type="ECO:0000269" key="6">
    <source>
    </source>
</evidence>
<evidence type="ECO:0000269" key="7">
    <source>
    </source>
</evidence>
<evidence type="ECO:0000269" key="8">
    <source>
    </source>
</evidence>
<evidence type="ECO:0000269" key="9">
    <source>
    </source>
</evidence>
<evidence type="ECO:0000303" key="10">
    <source>
    </source>
</evidence>
<evidence type="ECO:0000303" key="11">
    <source>
    </source>
</evidence>
<evidence type="ECO:0000303" key="12">
    <source>
    </source>
</evidence>
<evidence type="ECO:0000305" key="13"/>
<evidence type="ECO:0000305" key="14">
    <source>
    </source>
</evidence>
<evidence type="ECO:0000312" key="15">
    <source>
        <dbReference type="HGNC" id="HGNC:727"/>
    </source>
</evidence>
<evidence type="ECO:0007744" key="16">
    <source>
        <dbReference type="PDB" id="6Q2S"/>
    </source>
</evidence>
<evidence type="ECO:0007829" key="17">
    <source>
        <dbReference type="PDB" id="2ASK"/>
    </source>
</evidence>
<accession>Q5T4W7</accession>
<accession>D3DPY1</accession>
<accession>D3DPY3</accession>
<accession>O95441</accession>
<accession>O96030</accession>
<accession>Q6P6A3</accession>
<sequence>MELGLGGLSTLSHCPWPRQQPALWPTLAALALLSSVAEASLGSAPRSPAPREGPPPVLASPAGHLPGGRTARWCSGRARRPPPQPSRPAPPPPAPPSALPRGGRAARAGGPGSRARAAGARGCRLRSQLVPVRALGLGHRSDELVRFRFCSGSCRRARSPHDLSLASLLGAGALRPPPGSRPVSQPCCRPTRYEAVSFMDVNSTWRTVDRLSATACGCLG</sequence>
<keyword id="KW-0002">3D-structure</keyword>
<keyword id="KW-0025">Alternative splicing</keyword>
<keyword id="KW-1015">Disulfide bond</keyword>
<keyword id="KW-0325">Glycoprotein</keyword>
<keyword id="KW-0339">Growth factor</keyword>
<keyword id="KW-1185">Reference proteome</keyword>
<keyword id="KW-0964">Secreted</keyword>
<keyword id="KW-0732">Signal</keyword>
<dbReference type="EMBL" id="AF109401">
    <property type="protein sequence ID" value="AAC98690.1"/>
    <property type="molecule type" value="mRNA"/>
</dbReference>
<dbReference type="EMBL" id="AF115765">
    <property type="protein sequence ID" value="AAD13109.1"/>
    <property type="molecule type" value="Genomic_DNA"/>
</dbReference>
<dbReference type="EMBL" id="AF115765">
    <property type="protein sequence ID" value="AAD13110.1"/>
    <property type="molecule type" value="Genomic_DNA"/>
</dbReference>
<dbReference type="EMBL" id="AJ245628">
    <property type="protein sequence ID" value="CAB52396.1"/>
    <property type="molecule type" value="Genomic_DNA"/>
</dbReference>
<dbReference type="EMBL" id="AF120274">
    <property type="protein sequence ID" value="AAD21075.1"/>
    <property type="molecule type" value="mRNA"/>
</dbReference>
<dbReference type="EMBL" id="AL357079">
    <property type="status" value="NOT_ANNOTATED_CDS"/>
    <property type="molecule type" value="Genomic_DNA"/>
</dbReference>
<dbReference type="EMBL" id="CH471059">
    <property type="protein sequence ID" value="EAX07074.1"/>
    <property type="molecule type" value="Genomic_DNA"/>
</dbReference>
<dbReference type="EMBL" id="CH471059">
    <property type="protein sequence ID" value="EAX07077.1"/>
    <property type="molecule type" value="Genomic_DNA"/>
</dbReference>
<dbReference type="EMBL" id="CH471059">
    <property type="protein sequence ID" value="EAX07079.1"/>
    <property type="molecule type" value="Genomic_DNA"/>
</dbReference>
<dbReference type="EMBL" id="CH471059">
    <property type="protein sequence ID" value="EAX07078.1"/>
    <property type="molecule type" value="Genomic_DNA"/>
</dbReference>
<dbReference type="EMBL" id="CH471059">
    <property type="protein sequence ID" value="EAX07080.1"/>
    <property type="molecule type" value="Genomic_DNA"/>
</dbReference>
<dbReference type="EMBL" id="BC062375">
    <property type="protein sequence ID" value="AAH62375.1"/>
    <property type="molecule type" value="mRNA"/>
</dbReference>
<dbReference type="CCDS" id="CCDS501.1">
    <molecule id="Q5T4W7-1"/>
</dbReference>
<dbReference type="CCDS" id="CCDS502.1">
    <molecule id="Q5T4W7-3"/>
</dbReference>
<dbReference type="RefSeq" id="NP_001129687.1">
    <molecule id="Q5T4W7-3"/>
    <property type="nucleotide sequence ID" value="NM_001136215.2"/>
</dbReference>
<dbReference type="RefSeq" id="NP_476431.2">
    <molecule id="Q5T4W7-3"/>
    <property type="nucleotide sequence ID" value="NM_057090.3"/>
</dbReference>
<dbReference type="RefSeq" id="NP_476432.2">
    <molecule id="Q5T4W7-1"/>
    <property type="nucleotide sequence ID" value="NM_057091.3"/>
</dbReference>
<dbReference type="RefSeq" id="XP_047289613.1">
    <molecule id="Q5T4W7-3"/>
    <property type="nucleotide sequence ID" value="XM_047433657.1"/>
</dbReference>
<dbReference type="RefSeq" id="XP_047289621.1">
    <molecule id="Q5T4W7-1"/>
    <property type="nucleotide sequence ID" value="XM_047433665.1"/>
</dbReference>
<dbReference type="PDB" id="2ASK">
    <property type="method" value="X-ray"/>
    <property type="resolution" value="1.55 A"/>
    <property type="chains" value="A/B=108-220"/>
</dbReference>
<dbReference type="PDB" id="2GH0">
    <property type="method" value="X-ray"/>
    <property type="resolution" value="1.92 A"/>
    <property type="chains" value="C/D=122-220"/>
</dbReference>
<dbReference type="PDB" id="2GYR">
    <property type="method" value="X-ray"/>
    <property type="resolution" value="2.60 A"/>
    <property type="chains" value="A/B/C/D/E/F=122-220"/>
</dbReference>
<dbReference type="PDB" id="2GYZ">
    <property type="method" value="X-ray"/>
    <property type="resolution" value="1.76 A"/>
    <property type="chains" value="A=122-220"/>
</dbReference>
<dbReference type="PDB" id="6Q2S">
    <property type="method" value="EM"/>
    <property type="resolution" value="3.80 A"/>
    <property type="chains" value="A/B=108-220"/>
</dbReference>
<dbReference type="PDBsum" id="2ASK"/>
<dbReference type="PDBsum" id="2GH0"/>
<dbReference type="PDBsum" id="2GYR"/>
<dbReference type="PDBsum" id="2GYZ"/>
<dbReference type="PDBsum" id="6Q2S"/>
<dbReference type="EMDB" id="EMD-20579"/>
<dbReference type="SMR" id="Q5T4W7"/>
<dbReference type="BioGRID" id="114510">
    <property type="interactions" value="1"/>
</dbReference>
<dbReference type="CORUM" id="Q5T4W7"/>
<dbReference type="DIP" id="DIP-29113N"/>
<dbReference type="FunCoup" id="Q5T4W7">
    <property type="interactions" value="543"/>
</dbReference>
<dbReference type="IntAct" id="Q5T4W7">
    <property type="interactions" value="1"/>
</dbReference>
<dbReference type="STRING" id="9606.ENSP00000387435"/>
<dbReference type="GlyCosmos" id="Q5T4W7">
    <property type="glycosylation" value="1 site, No reported glycans"/>
</dbReference>
<dbReference type="GlyGen" id="Q5T4W7">
    <property type="glycosylation" value="3 sites, 1 O-linked glycan (2 sites)"/>
</dbReference>
<dbReference type="iPTMnet" id="Q5T4W7"/>
<dbReference type="PhosphoSitePlus" id="Q5T4W7"/>
<dbReference type="BioMuta" id="ARTN"/>
<dbReference type="DMDM" id="74744994"/>
<dbReference type="MassIVE" id="Q5T4W7"/>
<dbReference type="PaxDb" id="9606-ENSP00000387435"/>
<dbReference type="TopDownProteomics" id="Q5T4W7-3">
    <molecule id="Q5T4W7-3"/>
</dbReference>
<dbReference type="ABCD" id="Q5T4W7">
    <property type="antibodies" value="6 sequenced antibodies"/>
</dbReference>
<dbReference type="Antibodypedia" id="18382">
    <property type="antibodies" value="369 antibodies from 30 providers"/>
</dbReference>
<dbReference type="DNASU" id="9048"/>
<dbReference type="Ensembl" id="ENST00000372354.3">
    <molecule id="Q5T4W7-1"/>
    <property type="protein sequence ID" value="ENSP00000361429.3"/>
    <property type="gene ID" value="ENSG00000117407.17"/>
</dbReference>
<dbReference type="Ensembl" id="ENST00000372359.10">
    <molecule id="Q5T4W7-1"/>
    <property type="protein sequence ID" value="ENSP00000361434.5"/>
    <property type="gene ID" value="ENSG00000117407.17"/>
</dbReference>
<dbReference type="Ensembl" id="ENST00000414809.7">
    <molecule id="Q5T4W7-3"/>
    <property type="protein sequence ID" value="ENSP00000387435.3"/>
    <property type="gene ID" value="ENSG00000117407.17"/>
</dbReference>
<dbReference type="Ensembl" id="ENST00000438616.3">
    <molecule id="Q5T4W7-2"/>
    <property type="protein sequence ID" value="ENSP00000391998.3"/>
    <property type="gene ID" value="ENSG00000117407.17"/>
</dbReference>
<dbReference type="Ensembl" id="ENST00000498139.6">
    <molecule id="Q5T4W7-3"/>
    <property type="protein sequence ID" value="ENSP00000436727.1"/>
    <property type="gene ID" value="ENSG00000117407.17"/>
</dbReference>
<dbReference type="GeneID" id="9048"/>
<dbReference type="KEGG" id="hsa:9048"/>
<dbReference type="MANE-Select" id="ENST00000372359.10">
    <property type="protein sequence ID" value="ENSP00000361434.5"/>
    <property type="RefSeq nucleotide sequence ID" value="NM_057091.3"/>
    <property type="RefSeq protein sequence ID" value="NP_476432.2"/>
</dbReference>
<dbReference type="UCSC" id="uc001cks.4">
    <molecule id="Q5T4W7-1"/>
    <property type="organism name" value="human"/>
</dbReference>
<dbReference type="AGR" id="HGNC:727"/>
<dbReference type="CTD" id="9048"/>
<dbReference type="DisGeNET" id="9048"/>
<dbReference type="GeneCards" id="ARTN"/>
<dbReference type="HGNC" id="HGNC:727">
    <property type="gene designation" value="ARTN"/>
</dbReference>
<dbReference type="HPA" id="ENSG00000117407">
    <property type="expression patterns" value="Low tissue specificity"/>
</dbReference>
<dbReference type="MIM" id="603886">
    <property type="type" value="gene"/>
</dbReference>
<dbReference type="neXtProt" id="NX_Q5T4W7"/>
<dbReference type="OpenTargets" id="ENSG00000117407"/>
<dbReference type="PharmGKB" id="PA25017"/>
<dbReference type="VEuPathDB" id="HostDB:ENSG00000117407"/>
<dbReference type="eggNOG" id="ENOG502S53F">
    <property type="taxonomic scope" value="Eukaryota"/>
</dbReference>
<dbReference type="GeneTree" id="ENSGT00950000182993"/>
<dbReference type="HOGENOM" id="CLU_102221_0_0_1"/>
<dbReference type="InParanoid" id="Q5T4W7"/>
<dbReference type="OMA" id="VTQPCCR"/>
<dbReference type="OrthoDB" id="9936891at2759"/>
<dbReference type="PAN-GO" id="Q5T4W7">
    <property type="GO annotations" value="3 GO annotations based on evolutionary models"/>
</dbReference>
<dbReference type="PhylomeDB" id="Q5T4W7"/>
<dbReference type="TreeFam" id="TF332366"/>
<dbReference type="PathwayCommons" id="Q5T4W7"/>
<dbReference type="Reactome" id="R-HSA-419037">
    <property type="pathway name" value="NCAM1 interactions"/>
</dbReference>
<dbReference type="Reactome" id="R-HSA-5673001">
    <property type="pathway name" value="RAF/MAP kinase cascade"/>
</dbReference>
<dbReference type="Reactome" id="R-HSA-8853659">
    <property type="pathway name" value="RET signaling"/>
</dbReference>
<dbReference type="SignaLink" id="Q5T4W7"/>
<dbReference type="SIGNOR" id="Q5T4W7"/>
<dbReference type="BioGRID-ORCS" id="9048">
    <property type="hits" value="12 hits in 1139 CRISPR screens"/>
</dbReference>
<dbReference type="EvolutionaryTrace" id="Q5T4W7"/>
<dbReference type="GeneWiki" id="Artemin"/>
<dbReference type="GenomeRNAi" id="9048"/>
<dbReference type="Pharos" id="Q5T4W7">
    <property type="development level" value="Tbio"/>
</dbReference>
<dbReference type="PRO" id="PR:Q5T4W7"/>
<dbReference type="Proteomes" id="UP000005640">
    <property type="component" value="Chromosome 1"/>
</dbReference>
<dbReference type="RNAct" id="Q5T4W7">
    <property type="molecule type" value="protein"/>
</dbReference>
<dbReference type="Bgee" id="ENSG00000117407">
    <property type="expression patterns" value="Expressed in male germ line stem cell (sensu Vertebrata) in testis and 125 other cell types or tissues"/>
</dbReference>
<dbReference type="ExpressionAtlas" id="Q5T4W7">
    <property type="expression patterns" value="baseline and differential"/>
</dbReference>
<dbReference type="GO" id="GO:0005576">
    <property type="term" value="C:extracellular region"/>
    <property type="evidence" value="ECO:0000304"/>
    <property type="project" value="Reactome"/>
</dbReference>
<dbReference type="GO" id="GO:0005615">
    <property type="term" value="C:extracellular space"/>
    <property type="evidence" value="ECO:0000314"/>
    <property type="project" value="UniProt"/>
</dbReference>
<dbReference type="GO" id="GO:0030116">
    <property type="term" value="F:glial cell-derived neurotrophic factor receptor binding"/>
    <property type="evidence" value="ECO:0007669"/>
    <property type="project" value="InterPro"/>
</dbReference>
<dbReference type="GO" id="GO:0008083">
    <property type="term" value="F:growth factor activity"/>
    <property type="evidence" value="ECO:0000314"/>
    <property type="project" value="UniProtKB"/>
</dbReference>
<dbReference type="GO" id="GO:0030971">
    <property type="term" value="F:receptor tyrosine kinase binding"/>
    <property type="evidence" value="ECO:0007669"/>
    <property type="project" value="InterPro"/>
</dbReference>
<dbReference type="GO" id="GO:0005102">
    <property type="term" value="F:signaling receptor binding"/>
    <property type="evidence" value="ECO:0000304"/>
    <property type="project" value="ProtInc"/>
</dbReference>
<dbReference type="GO" id="GO:0007411">
    <property type="term" value="P:axon guidance"/>
    <property type="evidence" value="ECO:0007669"/>
    <property type="project" value="Ensembl"/>
</dbReference>
<dbReference type="GO" id="GO:0035860">
    <property type="term" value="P:glial cell-derived neurotrophic factor receptor signaling pathway"/>
    <property type="evidence" value="ECO:0000314"/>
    <property type="project" value="UniProtKB"/>
</dbReference>
<dbReference type="GO" id="GO:0050930">
    <property type="term" value="P:induction of positive chemotaxis"/>
    <property type="evidence" value="ECO:0007669"/>
    <property type="project" value="Ensembl"/>
</dbReference>
<dbReference type="GO" id="GO:0097021">
    <property type="term" value="P:lymphocyte migration into lymphoid organs"/>
    <property type="evidence" value="ECO:0007669"/>
    <property type="project" value="Ensembl"/>
</dbReference>
<dbReference type="GO" id="GO:0007405">
    <property type="term" value="P:neuroblast proliferation"/>
    <property type="evidence" value="ECO:0000304"/>
    <property type="project" value="ProtInc"/>
</dbReference>
<dbReference type="GO" id="GO:0007422">
    <property type="term" value="P:peripheral nervous system development"/>
    <property type="evidence" value="ECO:0000318"/>
    <property type="project" value="GO_Central"/>
</dbReference>
<dbReference type="GO" id="GO:0061146">
    <property type="term" value="P:Peyer's patch morphogenesis"/>
    <property type="evidence" value="ECO:0007669"/>
    <property type="project" value="Ensembl"/>
</dbReference>
<dbReference type="GO" id="GO:0007165">
    <property type="term" value="P:signal transduction"/>
    <property type="evidence" value="ECO:0000304"/>
    <property type="project" value="ProtInc"/>
</dbReference>
<dbReference type="CDD" id="cd19381">
    <property type="entry name" value="TGF_beta_Artemin"/>
    <property type="match status" value="1"/>
</dbReference>
<dbReference type="DisProt" id="DP02428"/>
<dbReference type="FunFam" id="2.10.90.10:FF:000032">
    <property type="entry name" value="Artemin"/>
    <property type="match status" value="1"/>
</dbReference>
<dbReference type="Gene3D" id="2.10.90.10">
    <property type="entry name" value="Cystine-knot cytokines"/>
    <property type="match status" value="1"/>
</dbReference>
<dbReference type="InterPro" id="IPR029034">
    <property type="entry name" value="Cystine-knot_cytokine"/>
</dbReference>
<dbReference type="InterPro" id="IPR043401">
    <property type="entry name" value="GDNF_fam"/>
</dbReference>
<dbReference type="InterPro" id="IPR001839">
    <property type="entry name" value="TGF-b_C"/>
</dbReference>
<dbReference type="PANTHER" id="PTHR12173:SF9">
    <property type="entry name" value="ARTEMIN"/>
    <property type="match status" value="1"/>
</dbReference>
<dbReference type="PANTHER" id="PTHR12173">
    <property type="entry name" value="GDNF SUBFAMILY OF TGF-BETA FAMILY"/>
    <property type="match status" value="1"/>
</dbReference>
<dbReference type="Pfam" id="PF00019">
    <property type="entry name" value="TGF_beta"/>
    <property type="match status" value="1"/>
</dbReference>
<dbReference type="SMART" id="SM00204">
    <property type="entry name" value="TGFB"/>
    <property type="match status" value="1"/>
</dbReference>
<dbReference type="SUPFAM" id="SSF57501">
    <property type="entry name" value="Cystine-knot cytokines"/>
    <property type="match status" value="1"/>
</dbReference>
<dbReference type="PROSITE" id="PS51362">
    <property type="entry name" value="TGF_BETA_2"/>
    <property type="match status" value="1"/>
</dbReference>
<gene>
    <name evidence="12 15" type="primary">ARTN</name>
    <name evidence="10" type="synonym">EVN</name>
</gene>